<reference key="1">
    <citation type="journal article" date="2007" name="DNA Res.">
        <title>Complete genomic structure of the bloom-forming toxic cyanobacterium Microcystis aeruginosa NIES-843.</title>
        <authorList>
            <person name="Kaneko T."/>
            <person name="Nakajima N."/>
            <person name="Okamoto S."/>
            <person name="Suzuki I."/>
            <person name="Tanabe Y."/>
            <person name="Tamaoki M."/>
            <person name="Nakamura Y."/>
            <person name="Kasai F."/>
            <person name="Watanabe A."/>
            <person name="Kawashima K."/>
            <person name="Kishida Y."/>
            <person name="Ono A."/>
            <person name="Shimizu Y."/>
            <person name="Takahashi C."/>
            <person name="Minami C."/>
            <person name="Fujishiro T."/>
            <person name="Kohara M."/>
            <person name="Katoh M."/>
            <person name="Nakazaki N."/>
            <person name="Nakayama S."/>
            <person name="Yamada M."/>
            <person name="Tabata S."/>
            <person name="Watanabe M.M."/>
        </authorList>
    </citation>
    <scope>NUCLEOTIDE SEQUENCE [LARGE SCALE GENOMIC DNA]</scope>
    <source>
        <strain>NIES-843 / IAM M-247</strain>
    </source>
</reference>
<protein>
    <recommendedName>
        <fullName evidence="1">ATP phosphoribosyltransferase regulatory subunit</fullName>
    </recommendedName>
</protein>
<proteinExistence type="inferred from homology"/>
<organism>
    <name type="scientific">Microcystis aeruginosa (strain NIES-843 / IAM M-2473)</name>
    <dbReference type="NCBI Taxonomy" id="449447"/>
    <lineage>
        <taxon>Bacteria</taxon>
        <taxon>Bacillati</taxon>
        <taxon>Cyanobacteriota</taxon>
        <taxon>Cyanophyceae</taxon>
        <taxon>Oscillatoriophycideae</taxon>
        <taxon>Chroococcales</taxon>
        <taxon>Microcystaceae</taxon>
        <taxon>Microcystis</taxon>
    </lineage>
</organism>
<feature type="chain" id="PRO_1000076247" description="ATP phosphoribosyltransferase regulatory subunit">
    <location>
        <begin position="1"/>
        <end position="405"/>
    </location>
</feature>
<gene>
    <name evidence="1" type="primary">hisZ</name>
    <name type="ordered locus">MAE_41680</name>
</gene>
<evidence type="ECO:0000255" key="1">
    <source>
        <dbReference type="HAMAP-Rule" id="MF_00125"/>
    </source>
</evidence>
<accession>B0JS32</accession>
<sequence length="405" mass="44704">MIHQPPAGTRDLLPLEVTQKGWINDRLQSVFQRWGYQRIVTSTIEWLDTLTAGGAIDPSTVIQLHGDSQGLSGLRPELTASIARSAVTRMSGESYPQRLCYRANVFRRPSAGYHGRQVEFYQAGVELLFSGGLLADAEILLLLADCFDSLAVPNWQIILGEAGLTRSLLSPFPAPLREQVKRCLALLDYVSLENLPYPNETLRQQARQLFHLRGNPEDVLAQVALLAQEESAQKAVNNLKSLVELLNADRSGPFPLILDLSLIQTFDYYTGIVFKAVSDHQQNLSILGQGGRYDQLLGVFHPQGQSAPGIGFSLNIEELHESLLSGQTLPTQAAPLDWLLIPLGNNAQIATFSKARSLRNGDPNLRVAIDLGGRSEAQIRTYARDRMIKNLAWVQEDGSVSEESL</sequence>
<dbReference type="EMBL" id="AP009552">
    <property type="protein sequence ID" value="BAG03990.1"/>
    <property type="molecule type" value="Genomic_DNA"/>
</dbReference>
<dbReference type="RefSeq" id="WP_012266851.1">
    <property type="nucleotide sequence ID" value="NC_010296.1"/>
</dbReference>
<dbReference type="SMR" id="B0JS32"/>
<dbReference type="STRING" id="449447.MAE_41680"/>
<dbReference type="PaxDb" id="449447-MAE_41680"/>
<dbReference type="EnsemblBacteria" id="BAG03990">
    <property type="protein sequence ID" value="BAG03990"/>
    <property type="gene ID" value="MAE_41680"/>
</dbReference>
<dbReference type="KEGG" id="mar:MAE_41680"/>
<dbReference type="PATRIC" id="fig|449447.4.peg.3771"/>
<dbReference type="eggNOG" id="COG3705">
    <property type="taxonomic scope" value="Bacteria"/>
</dbReference>
<dbReference type="HOGENOM" id="CLU_025113_0_2_3"/>
<dbReference type="BioCyc" id="MAER449447:MAE_RS18035-MONOMER"/>
<dbReference type="UniPathway" id="UPA00031">
    <property type="reaction ID" value="UER00006"/>
</dbReference>
<dbReference type="Proteomes" id="UP000001510">
    <property type="component" value="Chromosome"/>
</dbReference>
<dbReference type="GO" id="GO:0005737">
    <property type="term" value="C:cytoplasm"/>
    <property type="evidence" value="ECO:0007669"/>
    <property type="project" value="UniProtKB-SubCell"/>
</dbReference>
<dbReference type="GO" id="GO:0004821">
    <property type="term" value="F:histidine-tRNA ligase activity"/>
    <property type="evidence" value="ECO:0007669"/>
    <property type="project" value="TreeGrafter"/>
</dbReference>
<dbReference type="GO" id="GO:0006427">
    <property type="term" value="P:histidyl-tRNA aminoacylation"/>
    <property type="evidence" value="ECO:0007669"/>
    <property type="project" value="TreeGrafter"/>
</dbReference>
<dbReference type="GO" id="GO:0000105">
    <property type="term" value="P:L-histidine biosynthetic process"/>
    <property type="evidence" value="ECO:0007669"/>
    <property type="project" value="UniProtKB-UniRule"/>
</dbReference>
<dbReference type="CDD" id="cd00773">
    <property type="entry name" value="HisRS-like_core"/>
    <property type="match status" value="1"/>
</dbReference>
<dbReference type="Gene3D" id="3.30.930.10">
    <property type="entry name" value="Bira Bifunctional Protein, Domain 2"/>
    <property type="match status" value="1"/>
</dbReference>
<dbReference type="HAMAP" id="MF_00125">
    <property type="entry name" value="HisZ"/>
    <property type="match status" value="1"/>
</dbReference>
<dbReference type="InterPro" id="IPR045864">
    <property type="entry name" value="aa-tRNA-synth_II/BPL/LPL"/>
</dbReference>
<dbReference type="InterPro" id="IPR041715">
    <property type="entry name" value="HisRS-like_core"/>
</dbReference>
<dbReference type="InterPro" id="IPR004516">
    <property type="entry name" value="HisRS/HisZ"/>
</dbReference>
<dbReference type="InterPro" id="IPR004517">
    <property type="entry name" value="HisZ"/>
</dbReference>
<dbReference type="NCBIfam" id="TIGR00443">
    <property type="entry name" value="hisZ_biosyn_reg"/>
    <property type="match status" value="1"/>
</dbReference>
<dbReference type="NCBIfam" id="NF008940">
    <property type="entry name" value="PRK12292.2-3"/>
    <property type="match status" value="1"/>
</dbReference>
<dbReference type="PANTHER" id="PTHR43707:SF1">
    <property type="entry name" value="HISTIDINE--TRNA LIGASE, MITOCHONDRIAL-RELATED"/>
    <property type="match status" value="1"/>
</dbReference>
<dbReference type="PANTHER" id="PTHR43707">
    <property type="entry name" value="HISTIDYL-TRNA SYNTHETASE"/>
    <property type="match status" value="1"/>
</dbReference>
<dbReference type="Pfam" id="PF13393">
    <property type="entry name" value="tRNA-synt_His"/>
    <property type="match status" value="1"/>
</dbReference>
<dbReference type="PIRSF" id="PIRSF001549">
    <property type="entry name" value="His-tRNA_synth"/>
    <property type="match status" value="1"/>
</dbReference>
<dbReference type="SUPFAM" id="SSF55681">
    <property type="entry name" value="Class II aaRS and biotin synthetases"/>
    <property type="match status" value="1"/>
</dbReference>
<name>HISZ_MICAN</name>
<keyword id="KW-0028">Amino-acid biosynthesis</keyword>
<keyword id="KW-0963">Cytoplasm</keyword>
<keyword id="KW-0368">Histidine biosynthesis</keyword>
<comment type="function">
    <text evidence="1">Required for the first step of histidine biosynthesis. May allow the feedback regulation of ATP phosphoribosyltransferase activity by histidine.</text>
</comment>
<comment type="pathway">
    <text evidence="1">Amino-acid biosynthesis; L-histidine biosynthesis; L-histidine from 5-phospho-alpha-D-ribose 1-diphosphate: step 1/9.</text>
</comment>
<comment type="subunit">
    <text evidence="1">Heteromultimer composed of HisG and HisZ subunits.</text>
</comment>
<comment type="subcellular location">
    <subcellularLocation>
        <location evidence="1">Cytoplasm</location>
    </subcellularLocation>
</comment>
<comment type="miscellaneous">
    <text>This function is generally fulfilled by the C-terminal part of HisG, which is missing in some bacteria such as this one.</text>
</comment>
<comment type="similarity">
    <text evidence="1">Belongs to the class-II aminoacyl-tRNA synthetase family. HisZ subfamily.</text>
</comment>